<keyword id="KW-0150">Chloroplast</keyword>
<keyword id="KW-0472">Membrane</keyword>
<keyword id="KW-0602">Photosynthesis</keyword>
<keyword id="KW-0604">Photosystem II</keyword>
<keyword id="KW-0934">Plastid</keyword>
<keyword id="KW-0674">Reaction center</keyword>
<keyword id="KW-0793">Thylakoid</keyword>
<keyword id="KW-0812">Transmembrane</keyword>
<keyword id="KW-1133">Transmembrane helix</keyword>
<proteinExistence type="inferred from homology"/>
<organism>
    <name type="scientific">Tupiella akineta</name>
    <name type="common">Green alga</name>
    <name type="synonym">Pseudendoclonium akinetum</name>
    <dbReference type="NCBI Taxonomy" id="160070"/>
    <lineage>
        <taxon>Eukaryota</taxon>
        <taxon>Viridiplantae</taxon>
        <taxon>Chlorophyta</taxon>
        <taxon>Ulvophyceae</taxon>
        <taxon>OUU clade</taxon>
        <taxon>Ulotrichales</taxon>
        <taxon>Tupiellaceae</taxon>
        <taxon>Tupiella</taxon>
    </lineage>
</organism>
<protein>
    <recommendedName>
        <fullName evidence="1">Photosystem II reaction center protein I</fullName>
        <shortName evidence="1">PSII-I</shortName>
    </recommendedName>
    <alternativeName>
        <fullName evidence="1">PSII 4.8 kDa protein</fullName>
    </alternativeName>
</protein>
<geneLocation type="chloroplast"/>
<name>PSBI_TUPAK</name>
<sequence length="35" mass="4083">MLTLKIFVYTVVTFFVSLFIFGFLSNDPGRNPNQR</sequence>
<gene>
    <name evidence="1" type="primary">psbI</name>
</gene>
<accession>Q3ZJ62</accession>
<comment type="function">
    <text evidence="1">One of the components of the core complex of photosystem II (PSII), required for its stability and/or assembly. PSII is a light-driven water:plastoquinone oxidoreductase that uses light energy to abstract electrons from H(2)O, generating O(2) and a proton gradient subsequently used for ATP formation. It consists of a core antenna complex that captures photons, and an electron transfer chain that converts photonic excitation into a charge separation.</text>
</comment>
<comment type="subunit">
    <text evidence="1">PSII is composed of 1 copy each of membrane proteins PsbA, PsbB, PsbC, PsbD, PsbE, PsbF, PsbH, PsbI, PsbJ, PsbK, PsbL, PsbM, PsbT, PsbX, PsbY, PsbZ, Psb30/Ycf12, at least 3 peripheral proteins of the oxygen-evolving complex and a large number of cofactors. It forms dimeric complexes.</text>
</comment>
<comment type="subcellular location">
    <subcellularLocation>
        <location evidence="1">Plastid</location>
        <location evidence="1">Chloroplast thylakoid membrane</location>
        <topology evidence="1">Single-pass membrane protein</topology>
    </subcellularLocation>
</comment>
<comment type="similarity">
    <text evidence="1">Belongs to the PsbI family.</text>
</comment>
<dbReference type="EMBL" id="AY835431">
    <property type="protein sequence ID" value="AAV80629.1"/>
    <property type="molecule type" value="Genomic_DNA"/>
</dbReference>
<dbReference type="RefSeq" id="YP_636205.1">
    <property type="nucleotide sequence ID" value="NC_008114.1"/>
</dbReference>
<dbReference type="SMR" id="Q3ZJ62"/>
<dbReference type="GeneID" id="4108809"/>
<dbReference type="GO" id="GO:0009535">
    <property type="term" value="C:chloroplast thylakoid membrane"/>
    <property type="evidence" value="ECO:0007669"/>
    <property type="project" value="UniProtKB-SubCell"/>
</dbReference>
<dbReference type="GO" id="GO:0009539">
    <property type="term" value="C:photosystem II reaction center"/>
    <property type="evidence" value="ECO:0007669"/>
    <property type="project" value="InterPro"/>
</dbReference>
<dbReference type="GO" id="GO:0015979">
    <property type="term" value="P:photosynthesis"/>
    <property type="evidence" value="ECO:0007669"/>
    <property type="project" value="UniProtKB-UniRule"/>
</dbReference>
<dbReference type="HAMAP" id="MF_01316">
    <property type="entry name" value="PSII_PsbI"/>
    <property type="match status" value="1"/>
</dbReference>
<dbReference type="InterPro" id="IPR003686">
    <property type="entry name" value="PSII_PsbI"/>
</dbReference>
<dbReference type="InterPro" id="IPR037271">
    <property type="entry name" value="PSII_PsbI_sf"/>
</dbReference>
<dbReference type="NCBIfam" id="NF002735">
    <property type="entry name" value="PRK02655.1"/>
    <property type="match status" value="1"/>
</dbReference>
<dbReference type="PANTHER" id="PTHR35772">
    <property type="entry name" value="PHOTOSYSTEM II REACTION CENTER PROTEIN I"/>
    <property type="match status" value="1"/>
</dbReference>
<dbReference type="PANTHER" id="PTHR35772:SF1">
    <property type="entry name" value="PHOTOSYSTEM II REACTION CENTER PROTEIN I"/>
    <property type="match status" value="1"/>
</dbReference>
<dbReference type="Pfam" id="PF02532">
    <property type="entry name" value="PsbI"/>
    <property type="match status" value="1"/>
</dbReference>
<dbReference type="SUPFAM" id="SSF161041">
    <property type="entry name" value="Photosystem II reaction center protein I, PsbI"/>
    <property type="match status" value="1"/>
</dbReference>
<evidence type="ECO:0000255" key="1">
    <source>
        <dbReference type="HAMAP-Rule" id="MF_01316"/>
    </source>
</evidence>
<feature type="chain" id="PRO_0000275807" description="Photosystem II reaction center protein I">
    <location>
        <begin position="1"/>
        <end position="35"/>
    </location>
</feature>
<feature type="transmembrane region" description="Helical" evidence="1">
    <location>
        <begin position="4"/>
        <end position="24"/>
    </location>
</feature>
<reference key="1">
    <citation type="journal article" date="2005" name="Mol. Biol. Evol.">
        <title>The chloroplast genome sequence of the green alga Pseudendoclonium akinetum (Ulvophyceae) reveals unusual structural features and new insights into the branching order of chlorophyte lineages.</title>
        <authorList>
            <person name="Pombert J.-F."/>
            <person name="Otis C."/>
            <person name="Lemieux C."/>
            <person name="Turmel M."/>
        </authorList>
    </citation>
    <scope>NUCLEOTIDE SEQUENCE [LARGE SCALE GENOMIC DNA]</scope>
    <source>
        <strain>UTEX 1912</strain>
    </source>
</reference>